<organism>
    <name type="scientific">Haemophilus influenzae (strain ATCC 51907 / DSM 11121 / KW20 / Rd)</name>
    <dbReference type="NCBI Taxonomy" id="71421"/>
    <lineage>
        <taxon>Bacteria</taxon>
        <taxon>Pseudomonadati</taxon>
        <taxon>Pseudomonadota</taxon>
        <taxon>Gammaproteobacteria</taxon>
        <taxon>Pasteurellales</taxon>
        <taxon>Pasteurellaceae</taxon>
        <taxon>Haemophilus</taxon>
    </lineage>
</organism>
<accession>P44955</accession>
<comment type="function">
    <text evidence="1">Plays a role in peptidoglycan recycling by cleaving the terminal beta-1,4-linked N-acetylglucosamine (GlcNAc) from peptide-linked peptidoglycan fragments, giving rise to free GlcNAc, anhydro-N-acetylmuramic acid and anhydro-N-acetylmuramic acid-linked peptides.</text>
</comment>
<comment type="catalytic activity">
    <reaction evidence="1">
        <text>Hydrolysis of terminal non-reducing N-acetyl-D-hexosamine residues in N-acetyl-beta-D-hexosaminides.</text>
        <dbReference type="EC" id="3.2.1.52"/>
    </reaction>
</comment>
<comment type="pathway">
    <text evidence="1">Cell wall biogenesis; peptidoglycan recycling.</text>
</comment>
<comment type="subunit">
    <text evidence="2">Monomer.</text>
</comment>
<comment type="subcellular location">
    <subcellularLocation>
        <location evidence="1">Cytoplasm</location>
    </subcellularLocation>
</comment>
<comment type="similarity">
    <text evidence="1">Belongs to the glycosyl hydrolase 3 family. NagZ subfamily.</text>
</comment>
<proteinExistence type="inferred from homology"/>
<reference key="1">
    <citation type="journal article" date="1995" name="Science">
        <title>Whole-genome random sequencing and assembly of Haemophilus influenzae Rd.</title>
        <authorList>
            <person name="Fleischmann R.D."/>
            <person name="Adams M.D."/>
            <person name="White O."/>
            <person name="Clayton R.A."/>
            <person name="Kirkness E.F."/>
            <person name="Kerlavage A.R."/>
            <person name="Bult C.J."/>
            <person name="Tomb J.-F."/>
            <person name="Dougherty B.A."/>
            <person name="Merrick J.M."/>
            <person name="McKenney K."/>
            <person name="Sutton G.G."/>
            <person name="FitzHugh W."/>
            <person name="Fields C.A."/>
            <person name="Gocayne J.D."/>
            <person name="Scott J.D."/>
            <person name="Shirley R."/>
            <person name="Liu L.-I."/>
            <person name="Glodek A."/>
            <person name="Kelley J.M."/>
            <person name="Weidman J.F."/>
            <person name="Phillips C.A."/>
            <person name="Spriggs T."/>
            <person name="Hedblom E."/>
            <person name="Cotton M.D."/>
            <person name="Utterback T.R."/>
            <person name="Hanna M.C."/>
            <person name="Nguyen D.T."/>
            <person name="Saudek D.M."/>
            <person name="Brandon R.C."/>
            <person name="Fine L.D."/>
            <person name="Fritchman J.L."/>
            <person name="Fuhrmann J.L."/>
            <person name="Geoghagen N.S.M."/>
            <person name="Gnehm C.L."/>
            <person name="McDonald L.A."/>
            <person name="Small K.V."/>
            <person name="Fraser C.M."/>
            <person name="Smith H.O."/>
            <person name="Venter J.C."/>
        </authorList>
    </citation>
    <scope>NUCLEOTIDE SEQUENCE [LARGE SCALE GENOMIC DNA]</scope>
    <source>
        <strain>ATCC 51907 / DSM 11121 / KW20 / Rd</strain>
    </source>
</reference>
<name>NAGZ_HAEIN</name>
<sequence length="351" mass="39704">MSSLLIDLKGKELEQEEVELLSHPLVAGLILFTRNFENREQIQELIRSVRQRVKKPLLITVDQEGGRVQRFRDGFTMLPSMQAFQETLSATEQVSFAKEAGWQMAAEMIALDIDLSFAPVLDLGHECRAIGDRSFSSDVKSAVNLATAFIDGMHQAGMASTGKHFPGHGHVLADSHLETPYDDRTKEEIFSGDLQPFQQLISQNKLDAIMPAHVIYSQCDSQPASGSKYWLKEILRKKLNFQGTIFSDDLGMKGAGVMGNFVERSKKALNAGCDLLLLCNEREGVIQVLDNLKLTENQPHFMARQARLQSLFKRRVINWNDLISDQRWRLNYQKLADIQSRWLDIQAAKND</sequence>
<evidence type="ECO:0000255" key="1">
    <source>
        <dbReference type="HAMAP-Rule" id="MF_00364"/>
    </source>
</evidence>
<evidence type="ECO:0000305" key="2"/>
<gene>
    <name evidence="1" type="primary">nagZ</name>
    <name type="ordered locus">HI_0959</name>
</gene>
<keyword id="KW-0131">Cell cycle</keyword>
<keyword id="KW-0132">Cell division</keyword>
<keyword id="KW-0133">Cell shape</keyword>
<keyword id="KW-0961">Cell wall biogenesis/degradation</keyword>
<keyword id="KW-0963">Cytoplasm</keyword>
<keyword id="KW-0326">Glycosidase</keyword>
<keyword id="KW-0378">Hydrolase</keyword>
<keyword id="KW-0573">Peptidoglycan synthesis</keyword>
<keyword id="KW-1185">Reference proteome</keyword>
<feature type="chain" id="PRO_0000210789" description="Beta-hexosaminidase">
    <location>
        <begin position="1"/>
        <end position="351"/>
    </location>
</feature>
<feature type="active site" description="Proton donor/acceptor" evidence="1">
    <location>
        <position position="176"/>
    </location>
</feature>
<feature type="active site" description="Nucleophile" evidence="1">
    <location>
        <position position="248"/>
    </location>
</feature>
<feature type="binding site" evidence="1">
    <location>
        <position position="62"/>
    </location>
    <ligand>
        <name>substrate</name>
    </ligand>
</feature>
<feature type="binding site" evidence="1">
    <location>
        <position position="70"/>
    </location>
    <ligand>
        <name>substrate</name>
    </ligand>
</feature>
<feature type="binding site" evidence="1">
    <location>
        <position position="133"/>
    </location>
    <ligand>
        <name>substrate</name>
    </ligand>
</feature>
<feature type="binding site" evidence="1">
    <location>
        <begin position="163"/>
        <end position="164"/>
    </location>
    <ligand>
        <name>substrate</name>
    </ligand>
</feature>
<feature type="site" description="Important for catalytic activity" evidence="1">
    <location>
        <position position="174"/>
    </location>
</feature>
<protein>
    <recommendedName>
        <fullName evidence="1">Beta-hexosaminidase</fullName>
        <ecNumber evidence="1">3.2.1.52</ecNumber>
    </recommendedName>
    <alternativeName>
        <fullName evidence="1">Beta-N-acetylhexosaminidase</fullName>
    </alternativeName>
    <alternativeName>
        <fullName evidence="1">N-acetyl-beta-glucosaminidase</fullName>
    </alternativeName>
</protein>
<dbReference type="EC" id="3.2.1.52" evidence="1"/>
<dbReference type="EMBL" id="L42023">
    <property type="protein sequence ID" value="AAC22620.1"/>
    <property type="molecule type" value="Genomic_DNA"/>
</dbReference>
<dbReference type="PIR" id="F64162">
    <property type="entry name" value="F64162"/>
</dbReference>
<dbReference type="RefSeq" id="NP_439120.1">
    <property type="nucleotide sequence ID" value="NC_000907.1"/>
</dbReference>
<dbReference type="SMR" id="P44955"/>
<dbReference type="STRING" id="71421.HI_0959"/>
<dbReference type="CAZy" id="GH3">
    <property type="family name" value="Glycoside Hydrolase Family 3"/>
</dbReference>
<dbReference type="EnsemblBacteria" id="AAC22620">
    <property type="protein sequence ID" value="AAC22620"/>
    <property type="gene ID" value="HI_0959"/>
</dbReference>
<dbReference type="KEGG" id="hin:HI_0959"/>
<dbReference type="PATRIC" id="fig|71421.8.peg.1001"/>
<dbReference type="eggNOG" id="COG1472">
    <property type="taxonomic scope" value="Bacteria"/>
</dbReference>
<dbReference type="HOGENOM" id="CLU_008392_0_0_6"/>
<dbReference type="OrthoDB" id="9786661at2"/>
<dbReference type="PhylomeDB" id="P44955"/>
<dbReference type="BioCyc" id="HINF71421:G1GJ1-1000-MONOMER"/>
<dbReference type="UniPathway" id="UPA00544"/>
<dbReference type="Proteomes" id="UP000000579">
    <property type="component" value="Chromosome"/>
</dbReference>
<dbReference type="GO" id="GO:0005829">
    <property type="term" value="C:cytosol"/>
    <property type="evidence" value="ECO:0000318"/>
    <property type="project" value="GO_Central"/>
</dbReference>
<dbReference type="GO" id="GO:0016231">
    <property type="term" value="F:beta-N-acetylglucosaminidase activity"/>
    <property type="evidence" value="ECO:0000318"/>
    <property type="project" value="GO_Central"/>
</dbReference>
<dbReference type="GO" id="GO:0005975">
    <property type="term" value="P:carbohydrate metabolic process"/>
    <property type="evidence" value="ECO:0007669"/>
    <property type="project" value="InterPro"/>
</dbReference>
<dbReference type="GO" id="GO:0051301">
    <property type="term" value="P:cell division"/>
    <property type="evidence" value="ECO:0007669"/>
    <property type="project" value="UniProtKB-KW"/>
</dbReference>
<dbReference type="GO" id="GO:0071555">
    <property type="term" value="P:cell wall organization"/>
    <property type="evidence" value="ECO:0007669"/>
    <property type="project" value="UniProtKB-KW"/>
</dbReference>
<dbReference type="GO" id="GO:0009252">
    <property type="term" value="P:peptidoglycan biosynthetic process"/>
    <property type="evidence" value="ECO:0007669"/>
    <property type="project" value="UniProtKB-KW"/>
</dbReference>
<dbReference type="GO" id="GO:0009254">
    <property type="term" value="P:peptidoglycan turnover"/>
    <property type="evidence" value="ECO:0000318"/>
    <property type="project" value="GO_Central"/>
</dbReference>
<dbReference type="GO" id="GO:0008360">
    <property type="term" value="P:regulation of cell shape"/>
    <property type="evidence" value="ECO:0007669"/>
    <property type="project" value="UniProtKB-KW"/>
</dbReference>
<dbReference type="FunFam" id="3.20.20.300:FF:000001">
    <property type="entry name" value="Beta-hexosaminidase"/>
    <property type="match status" value="1"/>
</dbReference>
<dbReference type="Gene3D" id="3.20.20.300">
    <property type="entry name" value="Glycoside hydrolase, family 3, N-terminal domain"/>
    <property type="match status" value="1"/>
</dbReference>
<dbReference type="HAMAP" id="MF_00364">
    <property type="entry name" value="NagZ"/>
    <property type="match status" value="1"/>
</dbReference>
<dbReference type="InterPro" id="IPR022956">
    <property type="entry name" value="Beta_hexosaminidase_bac"/>
</dbReference>
<dbReference type="InterPro" id="IPR019800">
    <property type="entry name" value="Glyco_hydro_3_AS"/>
</dbReference>
<dbReference type="InterPro" id="IPR001764">
    <property type="entry name" value="Glyco_hydro_3_N"/>
</dbReference>
<dbReference type="InterPro" id="IPR036962">
    <property type="entry name" value="Glyco_hydro_3_N_sf"/>
</dbReference>
<dbReference type="InterPro" id="IPR017853">
    <property type="entry name" value="Glycoside_hydrolase_SF"/>
</dbReference>
<dbReference type="InterPro" id="IPR050226">
    <property type="entry name" value="NagZ_Beta-hexosaminidase"/>
</dbReference>
<dbReference type="NCBIfam" id="NF003740">
    <property type="entry name" value="PRK05337.1"/>
    <property type="match status" value="1"/>
</dbReference>
<dbReference type="PANTHER" id="PTHR30480:SF13">
    <property type="entry name" value="BETA-HEXOSAMINIDASE"/>
    <property type="match status" value="1"/>
</dbReference>
<dbReference type="PANTHER" id="PTHR30480">
    <property type="entry name" value="BETA-HEXOSAMINIDASE-RELATED"/>
    <property type="match status" value="1"/>
</dbReference>
<dbReference type="Pfam" id="PF00933">
    <property type="entry name" value="Glyco_hydro_3"/>
    <property type="match status" value="1"/>
</dbReference>
<dbReference type="SUPFAM" id="SSF51445">
    <property type="entry name" value="(Trans)glycosidases"/>
    <property type="match status" value="1"/>
</dbReference>
<dbReference type="PROSITE" id="PS00775">
    <property type="entry name" value="GLYCOSYL_HYDROL_F3"/>
    <property type="match status" value="1"/>
</dbReference>